<gene>
    <name type="primary">mprA</name>
    <name type="ordered locus">BQ2027_MB1007</name>
</gene>
<feature type="chain" id="PRO_0000308419" description="Response regulator MprA">
    <location>
        <begin position="1"/>
        <end position="230"/>
    </location>
</feature>
<feature type="domain" description="Response regulatory" evidence="2">
    <location>
        <begin position="4"/>
        <end position="118"/>
    </location>
</feature>
<feature type="DNA-binding region" description="OmpR/PhoB-type" evidence="3">
    <location>
        <begin position="129"/>
        <end position="227"/>
    </location>
</feature>
<feature type="modified residue" description="4-aspartylphosphate" evidence="2">
    <location>
        <position position="48"/>
    </location>
</feature>
<sequence length="230" mass="25924">MSVRILVVDDDRAVRESLRRSLSFNGYSVELAHDGVEALDMIASDRPDALVLDVMMPRLDGLEVCRQLRSTGDDLPILVLTARDSVSERVAGLDAGADDYLPKPFALEELLARMRALLRRTKPEDAAESMAMRFSDLTLDPVTREVNRGQRRISLTRTEFALLEMLIANPRRVLTRSRILEEVWGFDFPTSGNALEVYVGYLRRKTEADGEPRLIHTVRGVGYVLRETPP</sequence>
<keyword id="KW-0010">Activator</keyword>
<keyword id="KW-0963">Cytoplasm</keyword>
<keyword id="KW-0238">DNA-binding</keyword>
<keyword id="KW-0597">Phosphoprotein</keyword>
<keyword id="KW-1185">Reference proteome</keyword>
<keyword id="KW-0678">Repressor</keyword>
<keyword id="KW-0346">Stress response</keyword>
<keyword id="KW-0804">Transcription</keyword>
<keyword id="KW-0805">Transcription regulation</keyword>
<keyword id="KW-0902">Two-component regulatory system</keyword>
<keyword id="KW-0843">Virulence</keyword>
<reference key="1">
    <citation type="journal article" date="2003" name="Infect. Immun.">
        <title>Functional analysis of the Mycobacterium tuberculosis MprAB two-component signal transduction system.</title>
        <authorList>
            <person name="Zahrt T.C."/>
            <person name="Wozniak C."/>
            <person name="Jones D."/>
            <person name="Trevett A."/>
        </authorList>
    </citation>
    <scope>NUCLEOTIDE SEQUENCE [GENOMIC DNA]</scope>
    <source>
        <strain>BCG / Pasteur</strain>
    </source>
</reference>
<reference key="2">
    <citation type="journal article" date="2003" name="Proc. Natl. Acad. Sci. U.S.A.">
        <title>The complete genome sequence of Mycobacterium bovis.</title>
        <authorList>
            <person name="Garnier T."/>
            <person name="Eiglmeier K."/>
            <person name="Camus J.-C."/>
            <person name="Medina N."/>
            <person name="Mansoor H."/>
            <person name="Pryor M."/>
            <person name="Duthoy S."/>
            <person name="Grondin S."/>
            <person name="Lacroix C."/>
            <person name="Monsempe C."/>
            <person name="Simon S."/>
            <person name="Harris B."/>
            <person name="Atkin R."/>
            <person name="Doggett J."/>
            <person name="Mayes R."/>
            <person name="Keating L."/>
            <person name="Wheeler P.R."/>
            <person name="Parkhill J."/>
            <person name="Barrell B.G."/>
            <person name="Cole S.T."/>
            <person name="Gordon S.V."/>
            <person name="Hewinson R.G."/>
        </authorList>
    </citation>
    <scope>NUCLEOTIDE SEQUENCE [LARGE SCALE GENOMIC DNA]</scope>
    <source>
        <strain>ATCC BAA-935 / AF2122/97</strain>
    </source>
</reference>
<reference key="3">
    <citation type="journal article" date="2017" name="Genome Announc.">
        <title>Updated reference genome sequence and annotation of Mycobacterium bovis AF2122/97.</title>
        <authorList>
            <person name="Malone K.M."/>
            <person name="Farrell D."/>
            <person name="Stuber T.P."/>
            <person name="Schubert O.T."/>
            <person name="Aebersold R."/>
            <person name="Robbe-Austerman S."/>
            <person name="Gordon S.V."/>
        </authorList>
    </citation>
    <scope>NUCLEOTIDE SEQUENCE [LARGE SCALE GENOMIC DNA]</scope>
    <scope>GENOME REANNOTATION</scope>
    <source>
        <strain>ATCC BAA-935 / AF2122/97</strain>
    </source>
</reference>
<reference key="4">
    <citation type="journal article" date="2001" name="Proc. Natl. Acad. Sci. U.S.A.">
        <title>Mycobacterium tuberculosis signal transduction system required for persistent infections.</title>
        <authorList>
            <person name="Zahrt T.C."/>
            <person name="Deretic V."/>
        </authorList>
    </citation>
    <scope>INDUCTION IN MACROPHAGES</scope>
    <source>
        <strain>BCG / Pasteur</strain>
    </source>
</reference>
<reference key="5">
    <citation type="journal article" date="2005" name="J. Bacteriol.">
        <title>Identification and characterization of a regulatory sequence recognized by Mycobacterium tuberculosis persistence regulator MprA.</title>
        <authorList>
            <person name="He H."/>
            <person name="Zahrt T.C."/>
        </authorList>
    </citation>
    <scope>FUNCTION AS A TRANSCRIPTIONAL REGULATOR</scope>
    <scope>INDUCTION</scope>
    <scope>AUTOREGULATION</scope>
    <source>
        <strain>BCG / Pasteur</strain>
    </source>
</reference>
<evidence type="ECO:0000250" key="1"/>
<evidence type="ECO:0000255" key="2">
    <source>
        <dbReference type="PROSITE-ProRule" id="PRU00169"/>
    </source>
</evidence>
<evidence type="ECO:0000255" key="3">
    <source>
        <dbReference type="PROSITE-ProRule" id="PRU01091"/>
    </source>
</evidence>
<evidence type="ECO:0000269" key="4">
    <source>
    </source>
</evidence>
<evidence type="ECO:0000269" key="5">
    <source>
    </source>
</evidence>
<evidence type="ECO:0000305" key="6"/>
<accession>Q7U0X4</accession>
<accession>A0A1R3XX06</accession>
<accession>Q84BX0</accession>
<accession>X2BGG7</accession>
<organism>
    <name type="scientific">Mycobacterium bovis (strain ATCC BAA-935 / AF2122/97)</name>
    <dbReference type="NCBI Taxonomy" id="233413"/>
    <lineage>
        <taxon>Bacteria</taxon>
        <taxon>Bacillati</taxon>
        <taxon>Actinomycetota</taxon>
        <taxon>Actinomycetes</taxon>
        <taxon>Mycobacteriales</taxon>
        <taxon>Mycobacteriaceae</taxon>
        <taxon>Mycobacterium</taxon>
        <taxon>Mycobacterium tuberculosis complex</taxon>
    </lineage>
</organism>
<name>MPRA_MYCBO</name>
<dbReference type="EMBL" id="AF490842">
    <property type="protein sequence ID" value="AAO85468.1"/>
    <property type="molecule type" value="Genomic_DNA"/>
</dbReference>
<dbReference type="EMBL" id="LT708304">
    <property type="protein sequence ID" value="SIT99606.1"/>
    <property type="molecule type" value="Genomic_DNA"/>
</dbReference>
<dbReference type="RefSeq" id="NP_854664.1">
    <property type="nucleotide sequence ID" value="NC_002945.3"/>
</dbReference>
<dbReference type="SMR" id="Q7U0X4"/>
<dbReference type="KEGG" id="mbo:BQ2027_MB1007"/>
<dbReference type="PATRIC" id="fig|233413.5.peg.1096"/>
<dbReference type="Proteomes" id="UP000001419">
    <property type="component" value="Chromosome"/>
</dbReference>
<dbReference type="GO" id="GO:0005829">
    <property type="term" value="C:cytosol"/>
    <property type="evidence" value="ECO:0007669"/>
    <property type="project" value="TreeGrafter"/>
</dbReference>
<dbReference type="GO" id="GO:0032993">
    <property type="term" value="C:protein-DNA complex"/>
    <property type="evidence" value="ECO:0007669"/>
    <property type="project" value="TreeGrafter"/>
</dbReference>
<dbReference type="GO" id="GO:0000156">
    <property type="term" value="F:phosphorelay response regulator activity"/>
    <property type="evidence" value="ECO:0007669"/>
    <property type="project" value="TreeGrafter"/>
</dbReference>
<dbReference type="GO" id="GO:0000976">
    <property type="term" value="F:transcription cis-regulatory region binding"/>
    <property type="evidence" value="ECO:0007669"/>
    <property type="project" value="TreeGrafter"/>
</dbReference>
<dbReference type="GO" id="GO:0006355">
    <property type="term" value="P:regulation of DNA-templated transcription"/>
    <property type="evidence" value="ECO:0007669"/>
    <property type="project" value="InterPro"/>
</dbReference>
<dbReference type="CDD" id="cd17627">
    <property type="entry name" value="REC_OmpR_PrrA-like"/>
    <property type="match status" value="1"/>
</dbReference>
<dbReference type="CDD" id="cd00383">
    <property type="entry name" value="trans_reg_C"/>
    <property type="match status" value="1"/>
</dbReference>
<dbReference type="FunFam" id="3.40.50.2300:FF:000001">
    <property type="entry name" value="DNA-binding response regulator PhoB"/>
    <property type="match status" value="1"/>
</dbReference>
<dbReference type="FunFam" id="1.10.10.10:FF:000005">
    <property type="entry name" value="Two-component system response regulator"/>
    <property type="match status" value="1"/>
</dbReference>
<dbReference type="Gene3D" id="3.40.50.2300">
    <property type="match status" value="1"/>
</dbReference>
<dbReference type="Gene3D" id="6.10.250.690">
    <property type="match status" value="1"/>
</dbReference>
<dbReference type="Gene3D" id="1.10.10.10">
    <property type="entry name" value="Winged helix-like DNA-binding domain superfamily/Winged helix DNA-binding domain"/>
    <property type="match status" value="1"/>
</dbReference>
<dbReference type="InterPro" id="IPR011006">
    <property type="entry name" value="CheY-like_superfamily"/>
</dbReference>
<dbReference type="InterPro" id="IPR001867">
    <property type="entry name" value="OmpR/PhoB-type_DNA-bd"/>
</dbReference>
<dbReference type="InterPro" id="IPR001789">
    <property type="entry name" value="Sig_transdc_resp-reg_receiver"/>
</dbReference>
<dbReference type="InterPro" id="IPR039420">
    <property type="entry name" value="WalR-like"/>
</dbReference>
<dbReference type="InterPro" id="IPR036388">
    <property type="entry name" value="WH-like_DNA-bd_sf"/>
</dbReference>
<dbReference type="PANTHER" id="PTHR48111">
    <property type="entry name" value="REGULATOR OF RPOS"/>
    <property type="match status" value="1"/>
</dbReference>
<dbReference type="PANTHER" id="PTHR48111:SF22">
    <property type="entry name" value="REGULATOR OF RPOS"/>
    <property type="match status" value="1"/>
</dbReference>
<dbReference type="Pfam" id="PF00072">
    <property type="entry name" value="Response_reg"/>
    <property type="match status" value="1"/>
</dbReference>
<dbReference type="Pfam" id="PF00486">
    <property type="entry name" value="Trans_reg_C"/>
    <property type="match status" value="1"/>
</dbReference>
<dbReference type="SMART" id="SM00448">
    <property type="entry name" value="REC"/>
    <property type="match status" value="1"/>
</dbReference>
<dbReference type="SMART" id="SM00862">
    <property type="entry name" value="Trans_reg_C"/>
    <property type="match status" value="1"/>
</dbReference>
<dbReference type="SUPFAM" id="SSF52172">
    <property type="entry name" value="CheY-like"/>
    <property type="match status" value="1"/>
</dbReference>
<dbReference type="PROSITE" id="PS51755">
    <property type="entry name" value="OMPR_PHOB"/>
    <property type="match status" value="1"/>
</dbReference>
<dbReference type="PROSITE" id="PS50110">
    <property type="entry name" value="RESPONSE_REGULATORY"/>
    <property type="match status" value="1"/>
</dbReference>
<comment type="function">
    <text evidence="1 5">Member of the two-component regulatory system MprB/MprA which contributes to maintaining a balance among several systems involved in stress resistance and is required for establishment and maintenance of persistent infection in the host. Functions as a transcriptional regulator that recognizes a 19-bp nucleotide motif comprizing two loosely conserved 8-bp direct DNA-binding motif repeats separated by a 3-bp spacer region (By similarity). MprB/MprA up-regulates expression of mprA and pepD.</text>
</comment>
<comment type="subunit">
    <text evidence="1">Monomer. Interaction with each conserved 8-bp repeat requires tandem binding by two protein monomers (By similarity).</text>
</comment>
<comment type="subcellular location">
    <subcellularLocation>
        <location evidence="6">Cytoplasm</location>
    </subcellularLocation>
</comment>
<comment type="induction">
    <text evidence="4 5">Autoregulated. Induced by low concentrations of sodium dodecyl sulfate (SDS). In strain BCG / Pasteur, induced during growth in macrophages.</text>
</comment>
<comment type="PTM">
    <text evidence="1">Phosphorylated and dephosphorylated by MprB.</text>
</comment>
<proteinExistence type="evidence at protein level"/>
<protein>
    <recommendedName>
        <fullName>Response regulator MprA</fullName>
    </recommendedName>
    <alternativeName>
        <fullName>Mycobacterial persistence regulator A</fullName>
    </alternativeName>
</protein>